<sequence>MARVKRGVTSHAKHKKVLKAVKGQWGRRKSTIRVAKQAMEKAMQYAYRDRRTKKREFKSLWIQRINAGVRSEGITYSKFINGLTKCGIKLDRKILAEIAYDSPEAFKTIVQKAQSALN</sequence>
<evidence type="ECO:0000255" key="1">
    <source>
        <dbReference type="HAMAP-Rule" id="MF_00382"/>
    </source>
</evidence>
<evidence type="ECO:0000305" key="2"/>
<keyword id="KW-1185">Reference proteome</keyword>
<keyword id="KW-0687">Ribonucleoprotein</keyword>
<keyword id="KW-0689">Ribosomal protein</keyword>
<keyword id="KW-0694">RNA-binding</keyword>
<keyword id="KW-0699">rRNA-binding</keyword>
<proteinExistence type="inferred from homology"/>
<comment type="function">
    <text evidence="1">Binds directly to 23S ribosomal RNA and is necessary for the in vitro assembly process of the 50S ribosomal subunit. It is not involved in the protein synthesizing functions of that subunit.</text>
</comment>
<comment type="similarity">
    <text evidence="1">Belongs to the bacterial ribosomal protein bL20 family.</text>
</comment>
<name>RL20_PELUB</name>
<feature type="chain" id="PRO_0000243710" description="Large ribosomal subunit protein bL20">
    <location>
        <begin position="1"/>
        <end position="118"/>
    </location>
</feature>
<gene>
    <name evidence="1" type="primary">rplT</name>
    <name type="ordered locus">SAR11_0441</name>
</gene>
<dbReference type="EMBL" id="CP000084">
    <property type="protein sequence ID" value="AAZ21263.1"/>
    <property type="molecule type" value="Genomic_DNA"/>
</dbReference>
<dbReference type="RefSeq" id="WP_006997461.1">
    <property type="nucleotide sequence ID" value="NC_007205.1"/>
</dbReference>
<dbReference type="SMR" id="Q4FNH6"/>
<dbReference type="STRING" id="335992.SAR11_0441"/>
<dbReference type="GeneID" id="66294940"/>
<dbReference type="KEGG" id="pub:SAR11_0441"/>
<dbReference type="eggNOG" id="COG0292">
    <property type="taxonomic scope" value="Bacteria"/>
</dbReference>
<dbReference type="HOGENOM" id="CLU_123265_0_1_5"/>
<dbReference type="OrthoDB" id="9808966at2"/>
<dbReference type="Proteomes" id="UP000002528">
    <property type="component" value="Chromosome"/>
</dbReference>
<dbReference type="GO" id="GO:1990904">
    <property type="term" value="C:ribonucleoprotein complex"/>
    <property type="evidence" value="ECO:0007669"/>
    <property type="project" value="UniProtKB-KW"/>
</dbReference>
<dbReference type="GO" id="GO:0005840">
    <property type="term" value="C:ribosome"/>
    <property type="evidence" value="ECO:0007669"/>
    <property type="project" value="UniProtKB-KW"/>
</dbReference>
<dbReference type="GO" id="GO:0019843">
    <property type="term" value="F:rRNA binding"/>
    <property type="evidence" value="ECO:0007669"/>
    <property type="project" value="UniProtKB-UniRule"/>
</dbReference>
<dbReference type="GO" id="GO:0003735">
    <property type="term" value="F:structural constituent of ribosome"/>
    <property type="evidence" value="ECO:0007669"/>
    <property type="project" value="InterPro"/>
</dbReference>
<dbReference type="GO" id="GO:0000027">
    <property type="term" value="P:ribosomal large subunit assembly"/>
    <property type="evidence" value="ECO:0007669"/>
    <property type="project" value="UniProtKB-UniRule"/>
</dbReference>
<dbReference type="GO" id="GO:0006412">
    <property type="term" value="P:translation"/>
    <property type="evidence" value="ECO:0007669"/>
    <property type="project" value="InterPro"/>
</dbReference>
<dbReference type="CDD" id="cd07026">
    <property type="entry name" value="Ribosomal_L20"/>
    <property type="match status" value="1"/>
</dbReference>
<dbReference type="FunFam" id="1.10.1900.20:FF:000001">
    <property type="entry name" value="50S ribosomal protein L20"/>
    <property type="match status" value="1"/>
</dbReference>
<dbReference type="Gene3D" id="6.10.160.10">
    <property type="match status" value="1"/>
</dbReference>
<dbReference type="Gene3D" id="1.10.1900.20">
    <property type="entry name" value="Ribosomal protein L20"/>
    <property type="match status" value="1"/>
</dbReference>
<dbReference type="HAMAP" id="MF_00382">
    <property type="entry name" value="Ribosomal_bL20"/>
    <property type="match status" value="1"/>
</dbReference>
<dbReference type="InterPro" id="IPR005813">
    <property type="entry name" value="Ribosomal_bL20"/>
</dbReference>
<dbReference type="InterPro" id="IPR049946">
    <property type="entry name" value="RIBOSOMAL_L20_CS"/>
</dbReference>
<dbReference type="InterPro" id="IPR035566">
    <property type="entry name" value="Ribosomal_protein_bL20_C"/>
</dbReference>
<dbReference type="NCBIfam" id="TIGR01032">
    <property type="entry name" value="rplT_bact"/>
    <property type="match status" value="1"/>
</dbReference>
<dbReference type="PANTHER" id="PTHR10986">
    <property type="entry name" value="39S RIBOSOMAL PROTEIN L20"/>
    <property type="match status" value="1"/>
</dbReference>
<dbReference type="Pfam" id="PF00453">
    <property type="entry name" value="Ribosomal_L20"/>
    <property type="match status" value="1"/>
</dbReference>
<dbReference type="PRINTS" id="PR00062">
    <property type="entry name" value="RIBOSOMALL20"/>
</dbReference>
<dbReference type="SUPFAM" id="SSF74731">
    <property type="entry name" value="Ribosomal protein L20"/>
    <property type="match status" value="1"/>
</dbReference>
<dbReference type="PROSITE" id="PS00937">
    <property type="entry name" value="RIBOSOMAL_L20"/>
    <property type="match status" value="1"/>
</dbReference>
<protein>
    <recommendedName>
        <fullName evidence="1">Large ribosomal subunit protein bL20</fullName>
    </recommendedName>
    <alternativeName>
        <fullName evidence="2">50S ribosomal protein L20</fullName>
    </alternativeName>
</protein>
<reference key="1">
    <citation type="journal article" date="2005" name="Science">
        <title>Genome streamlining in a cosmopolitan oceanic bacterium.</title>
        <authorList>
            <person name="Giovannoni S.J."/>
            <person name="Tripp H.J."/>
            <person name="Givan S."/>
            <person name="Podar M."/>
            <person name="Vergin K.L."/>
            <person name="Baptista D."/>
            <person name="Bibbs L."/>
            <person name="Eads J."/>
            <person name="Richardson T.H."/>
            <person name="Noordewier M."/>
            <person name="Rappe M.S."/>
            <person name="Short J.M."/>
            <person name="Carrington J.C."/>
            <person name="Mathur E.J."/>
        </authorList>
    </citation>
    <scope>NUCLEOTIDE SEQUENCE [LARGE SCALE GENOMIC DNA]</scope>
    <source>
        <strain>HTCC1062</strain>
    </source>
</reference>
<accession>Q4FNH6</accession>
<organism>
    <name type="scientific">Pelagibacter ubique (strain HTCC1062)</name>
    <dbReference type="NCBI Taxonomy" id="335992"/>
    <lineage>
        <taxon>Bacteria</taxon>
        <taxon>Pseudomonadati</taxon>
        <taxon>Pseudomonadota</taxon>
        <taxon>Alphaproteobacteria</taxon>
        <taxon>Candidatus Pelagibacterales</taxon>
        <taxon>Candidatus Pelagibacteraceae</taxon>
        <taxon>Candidatus Pelagibacter</taxon>
    </lineage>
</organism>